<feature type="chain" id="PRO_0000360998" description="Outer dynein arm-docking complex subunit 1">
    <location>
        <begin position="1"/>
        <end position="694"/>
    </location>
</feature>
<feature type="region of interest" description="Disordered" evidence="4">
    <location>
        <begin position="271"/>
        <end position="290"/>
    </location>
</feature>
<feature type="region of interest" description="Disordered" evidence="4">
    <location>
        <begin position="531"/>
        <end position="550"/>
    </location>
</feature>
<feature type="region of interest" description="Disordered" evidence="4">
    <location>
        <begin position="571"/>
        <end position="694"/>
    </location>
</feature>
<feature type="coiled-coil region" evidence="3">
    <location>
        <begin position="27"/>
        <end position="192"/>
    </location>
</feature>
<feature type="coiled-coil region" evidence="3">
    <location>
        <begin position="222"/>
        <end position="259"/>
    </location>
</feature>
<feature type="coiled-coil region" evidence="3">
    <location>
        <begin position="339"/>
        <end position="418"/>
    </location>
</feature>
<feature type="compositionally biased region" description="Low complexity" evidence="4">
    <location>
        <begin position="628"/>
        <end position="642"/>
    </location>
</feature>
<feature type="compositionally biased region" description="Polar residues" evidence="4">
    <location>
        <begin position="655"/>
        <end position="672"/>
    </location>
</feature>
<feature type="compositionally biased region" description="Low complexity" evidence="4">
    <location>
        <begin position="673"/>
        <end position="687"/>
    </location>
</feature>
<feature type="modified residue" description="Phosphoserine" evidence="6">
    <location>
        <position position="536"/>
    </location>
</feature>
<feature type="modified residue" description="Phosphoserine" evidence="6">
    <location>
        <position position="542"/>
    </location>
</feature>
<feature type="modified residue" description="Phosphoserine" evidence="6">
    <location>
        <position position="543"/>
    </location>
</feature>
<feature type="modified residue" description="Phosphoserine" evidence="6">
    <location>
        <position position="545"/>
    </location>
</feature>
<keyword id="KW-0966">Cell projection</keyword>
<keyword id="KW-0969">Cilium</keyword>
<keyword id="KW-0175">Coiled coil</keyword>
<keyword id="KW-0963">Cytoplasm</keyword>
<keyword id="KW-0206">Cytoskeleton</keyword>
<keyword id="KW-0597">Phosphoprotein</keyword>
<keyword id="KW-1185">Reference proteome</keyword>
<sequence>MRLGLSSRSARSEEGSEIFLEGPVDGELSRLHRQRKVMELERRAYSREVHQRIRKQVEEIRQLEMLRAKLQMQINVAQTQVKRLGDKKRLADMDHLLKCRAQVQIEIEALQEQNRALEKQIQDWETHILTQSKDISTPDVILDQKMKIQRRIRILEDQLDRVTCHFDIHLVRNAALREELELLRIERGRYLNMDRKLKKEIHLLQEMVGALSTSSTSAYTAREEAKTKMGMLQERAEKELAQSDTEAQILLRQISHLEQLHRFLKLKNHDRQPDPGVVQKEEQRAWETSEGLRKTSQEKLVLRYEDTLNKLAQLTGESDPDLLVEKYLELEERNFAEFNFINEQNSELYHLQEEIKEMQEALVSEHASQDKQSLEREQQCKVLQQDVEKVCSESERLEARFQVLRVQLEKIKTDIQVLFDKAQCDNSVIKDLLGVKTYMRDRDIGLFLSTIEKRLVQLLTVQAFLEVQNNVPLADAALLALGQSIQEPPKKTTPLKPPDTMEDSSGVVIKDDYPMSKEELLSQVMKLVQLQDEEGSPKKRDSSPSLTLSSPRISLAAASVHARKASVVPESILSHKTGRGRGTGSISHVTFGDSASAPGPVTLASTSASGLPVSGRGSQGGRGAFKHTSSSSYLGSTGYLETSRGRESGTGGGHSQSMGSEMSRGFSSGSGQTSSAAPASRPSSATSKDSRGYN</sequence>
<proteinExistence type="evidence at protein level"/>
<name>ODAD1_RAT</name>
<comment type="function">
    <text evidence="1 2">Component of the outer dynein arm-docking complex that mediates outer dynein arms (ODA) binding onto the doublet microtubule. Involved in mediating assembly of both ODAs and their axonemal docking complex onto ciliary microtubules (By similarity).</text>
</comment>
<comment type="subunit">
    <text evidence="1 2">Component of the outer dynein arm-docking complex along with ODAD2, ODAD3, ODAD4 and CLXN. Interacts with ODAD3. Interacts with ODAD4; this interaction may facilitate the recruitment and/or attachment of outer dynein arm docking complex proteins,including ODAD1, ODAD3, and ODAD4 to ciliary axonemes. Interacts with DNAH9. Interacts with MNS1 (By similarity). Interacts with PIERCE1 and PIERCE2; the interactions link the outer dynein arms docking complex (ODA-DC) to the internal microtubule inner proteins (MIP) in cilium axoneme (By similarity).</text>
</comment>
<comment type="subcellular location">
    <subcellularLocation>
        <location evidence="2">Cytoplasm</location>
        <location evidence="2">Cytoskeleton</location>
        <location evidence="2">Cilium axoneme</location>
    </subcellularLocation>
</comment>
<comment type="similarity">
    <text evidence="5">Belongs to the ODA1/DCC2 family.</text>
</comment>
<protein>
    <recommendedName>
        <fullName>Outer dynein arm-docking complex subunit 1</fullName>
    </recommendedName>
    <alternativeName>
        <fullName>Coiled-coil domain-containing protein 114</fullName>
    </alternativeName>
</protein>
<gene>
    <name type="primary">Odad1</name>
    <name type="synonym">Ccdc114</name>
</gene>
<accession>B1H228</accession>
<reference key="1">
    <citation type="journal article" date="2004" name="Genome Res.">
        <title>The status, quality, and expansion of the NIH full-length cDNA project: the Mammalian Gene Collection (MGC).</title>
        <authorList>
            <consortium name="The MGC Project Team"/>
        </authorList>
    </citation>
    <scope>NUCLEOTIDE SEQUENCE [LARGE SCALE MRNA]</scope>
    <source>
        <tissue>Testis</tissue>
    </source>
</reference>
<reference key="2">
    <citation type="journal article" date="2012" name="Nat. Commun.">
        <title>Quantitative maps of protein phosphorylation sites across 14 different rat organs and tissues.</title>
        <authorList>
            <person name="Lundby A."/>
            <person name="Secher A."/>
            <person name="Lage K."/>
            <person name="Nordsborg N.B."/>
            <person name="Dmytriyev A."/>
            <person name="Lundby C."/>
            <person name="Olsen J.V."/>
        </authorList>
    </citation>
    <scope>PHOSPHORYLATION [LARGE SCALE ANALYSIS] AT SER-536; SER-542; SER-543 AND SER-545</scope>
    <scope>IDENTIFICATION BY MASS SPECTROMETRY [LARGE SCALE ANALYSIS]</scope>
</reference>
<organism>
    <name type="scientific">Rattus norvegicus</name>
    <name type="common">Rat</name>
    <dbReference type="NCBI Taxonomy" id="10116"/>
    <lineage>
        <taxon>Eukaryota</taxon>
        <taxon>Metazoa</taxon>
        <taxon>Chordata</taxon>
        <taxon>Craniata</taxon>
        <taxon>Vertebrata</taxon>
        <taxon>Euteleostomi</taxon>
        <taxon>Mammalia</taxon>
        <taxon>Eutheria</taxon>
        <taxon>Euarchontoglires</taxon>
        <taxon>Glires</taxon>
        <taxon>Rodentia</taxon>
        <taxon>Myomorpha</taxon>
        <taxon>Muroidea</taxon>
        <taxon>Muridae</taxon>
        <taxon>Murinae</taxon>
        <taxon>Rattus</taxon>
    </lineage>
</organism>
<evidence type="ECO:0000250" key="1">
    <source>
        <dbReference type="UniProtKB" id="F1N2N9"/>
    </source>
</evidence>
<evidence type="ECO:0000250" key="2">
    <source>
        <dbReference type="UniProtKB" id="Q96M63"/>
    </source>
</evidence>
<evidence type="ECO:0000255" key="3"/>
<evidence type="ECO:0000256" key="4">
    <source>
        <dbReference type="SAM" id="MobiDB-lite"/>
    </source>
</evidence>
<evidence type="ECO:0000305" key="5"/>
<evidence type="ECO:0007744" key="6">
    <source>
    </source>
</evidence>
<dbReference type="EMBL" id="BC160835">
    <property type="protein sequence ID" value="AAI60835.1"/>
    <property type="molecule type" value="mRNA"/>
</dbReference>
<dbReference type="RefSeq" id="NP_001119749.1">
    <property type="nucleotide sequence ID" value="NM_001126277.2"/>
</dbReference>
<dbReference type="RefSeq" id="XP_008757609.1">
    <property type="nucleotide sequence ID" value="XM_008759387.4"/>
</dbReference>
<dbReference type="RefSeq" id="XP_008757610.1">
    <property type="nucleotide sequence ID" value="XM_008759388.2"/>
</dbReference>
<dbReference type="RefSeq" id="XP_063118247.1">
    <property type="nucleotide sequence ID" value="XM_063262177.1"/>
</dbReference>
<dbReference type="SMR" id="B1H228"/>
<dbReference type="FunCoup" id="B1H228">
    <property type="interactions" value="76"/>
</dbReference>
<dbReference type="STRING" id="10116.ENSRNOP00000028662"/>
<dbReference type="iPTMnet" id="B1H228"/>
<dbReference type="PhosphoSitePlus" id="B1H228"/>
<dbReference type="PaxDb" id="10116-ENSRNOP00000028662"/>
<dbReference type="GeneID" id="308594"/>
<dbReference type="KEGG" id="rno:308594"/>
<dbReference type="UCSC" id="RGD:1308141">
    <property type="organism name" value="rat"/>
</dbReference>
<dbReference type="AGR" id="RGD:1308141"/>
<dbReference type="CTD" id="93233"/>
<dbReference type="RGD" id="1308141">
    <property type="gene designation" value="Odad1"/>
</dbReference>
<dbReference type="VEuPathDB" id="HostDB:ENSRNOG00000021109"/>
<dbReference type="eggNOG" id="ENOG502QSIU">
    <property type="taxonomic scope" value="Eukaryota"/>
</dbReference>
<dbReference type="HOGENOM" id="CLU_027546_3_1_1"/>
<dbReference type="InParanoid" id="B1H228"/>
<dbReference type="OrthoDB" id="70147at9989"/>
<dbReference type="PhylomeDB" id="B1H228"/>
<dbReference type="TreeFam" id="TF323742"/>
<dbReference type="PRO" id="PR:B1H228"/>
<dbReference type="Proteomes" id="UP000002494">
    <property type="component" value="Chromosome 1"/>
</dbReference>
<dbReference type="Bgee" id="ENSRNOG00000021109">
    <property type="expression patterns" value="Expressed in testis and 10 other cell types or tissues"/>
</dbReference>
<dbReference type="GO" id="GO:0005930">
    <property type="term" value="C:axoneme"/>
    <property type="evidence" value="ECO:0000266"/>
    <property type="project" value="RGD"/>
</dbReference>
<dbReference type="GO" id="GO:0005929">
    <property type="term" value="C:cilium"/>
    <property type="evidence" value="ECO:0000250"/>
    <property type="project" value="UniProtKB"/>
</dbReference>
<dbReference type="GO" id="GO:0036157">
    <property type="term" value="C:outer dynein arm"/>
    <property type="evidence" value="ECO:0000250"/>
    <property type="project" value="UniProtKB"/>
</dbReference>
<dbReference type="GO" id="GO:0120228">
    <property type="term" value="C:outer dynein arm docking complex"/>
    <property type="evidence" value="ECO:0000250"/>
    <property type="project" value="UniProtKB"/>
</dbReference>
<dbReference type="GO" id="GO:0003341">
    <property type="term" value="P:cilium movement"/>
    <property type="evidence" value="ECO:0000250"/>
    <property type="project" value="UniProtKB"/>
</dbReference>
<dbReference type="GO" id="GO:0036158">
    <property type="term" value="P:outer dynein arm assembly"/>
    <property type="evidence" value="ECO:0000250"/>
    <property type="project" value="UniProtKB"/>
</dbReference>
<dbReference type="InterPro" id="IPR051876">
    <property type="entry name" value="ODA-DC/CCD"/>
</dbReference>
<dbReference type="InterPro" id="IPR049258">
    <property type="entry name" value="ODAD1_CC"/>
</dbReference>
<dbReference type="PANTHER" id="PTHR21694">
    <property type="entry name" value="COILED-COIL DOMAIN-CONTAINING PROTEIN 63"/>
    <property type="match status" value="1"/>
</dbReference>
<dbReference type="PANTHER" id="PTHR21694:SF35">
    <property type="entry name" value="OUTER DYNEIN ARM-DOCKING COMPLEX SUBUNIT 1"/>
    <property type="match status" value="1"/>
</dbReference>
<dbReference type="Pfam" id="PF21773">
    <property type="entry name" value="ODAD1_CC"/>
    <property type="match status" value="1"/>
</dbReference>